<reference key="1">
    <citation type="journal article" date="1991" name="J. Mol. Biol.">
        <title>DNA sequence of the filamentous bacteriophage Pf1.</title>
        <authorList>
            <person name="Hill D.F."/>
            <person name="Short N.J."/>
            <person name="Perham R.N."/>
            <person name="Petersen G.B."/>
        </authorList>
    </citation>
    <scope>NUCLEOTIDE SEQUENCE [GENOMIC DNA]</scope>
    <source>
        <strain>ATCC 25102-B1 / pf</strain>
    </source>
</reference>
<reference key="2">
    <citation type="journal article" date="2006" name="Virology">
        <title>Identification and specificity of pilus adsorption proteins of filamentous bacteriophages infecting Pseudomonas aeruginosa.</title>
        <authorList>
            <person name="Holland S.J."/>
            <person name="Sanz C."/>
            <person name="Perham R.N."/>
        </authorList>
    </citation>
    <scope>FUNCTION</scope>
</reference>
<comment type="function">
    <text evidence="1 2">Plays essential roles both in the penetration of the viral genome into the bacterial host via pilus retraction and in the extrusion process (By similarity). During the initial step of infection, G3P mediates adsorption of the phage to its primary receptor, the tip of host type IV PAK pilus (By similarity). Attachment of the phage causes pilus retraction bringing the viral particle into close proximity of the host cell inner membrane (By similarity). Subsequent interaction with a secondary host entry receptor induces penetration of the viral DNA into the host cytoplasm (By similarity). In the extrusion process, G3P mediates the release of the membrane-anchored virion from the cell via its C-terminal domain (By similarity).</text>
</comment>
<comment type="subunit">
    <text evidence="2">Interacts with G6P; this interaction is required for proper integration of G3P and G6P into the virion (By similarity). Interacts with G8P. Interacts with the tip of the host pilus (By similarity).</text>
</comment>
<comment type="subcellular location">
    <subcellularLocation>
        <location evidence="5">Virion</location>
    </subcellularLocation>
    <subcellularLocation>
        <location evidence="5">Host membrane</location>
        <topology evidence="5">Single-pass type I membrane protein</topology>
    </subcellularLocation>
    <text>Prior to assembly, G3P is found associated with the bacterial host inner membrane. There are about five copies of this protein per mature phage that are located on the head side of the filamentous virion.</text>
</comment>
<comment type="similarity">
    <text evidence="5">Belongs to the inovirus G3P protein family.</text>
</comment>
<accession>P25129</accession>
<keyword id="KW-1043">Host membrane</keyword>
<keyword id="KW-0945">Host-virus interaction</keyword>
<keyword id="KW-0472">Membrane</keyword>
<keyword id="KW-1185">Reference proteome</keyword>
<keyword id="KW-0732">Signal</keyword>
<keyword id="KW-0812">Transmembrane</keyword>
<keyword id="KW-1133">Transmembrane helix</keyword>
<keyword id="KW-1233">Viral attachment to host adhesion receptor</keyword>
<keyword id="KW-1161">Viral attachment to host cell</keyword>
<keyword id="KW-1175">Viral attachment to host cell pilus</keyword>
<keyword id="KW-1234">Viral attachment to host entry receptor</keyword>
<keyword id="KW-1249">Viral extrusion</keyword>
<keyword id="KW-1162">Viral penetration into host cytoplasm</keyword>
<keyword id="KW-1241">Viral penetration into host cytoplasm via pilus retraction</keyword>
<keyword id="KW-1188">Viral release from host cell</keyword>
<keyword id="KW-0946">Virion</keyword>
<keyword id="KW-1160">Virus entry into host cell</keyword>
<gene>
    <name type="primary">III</name>
</gene>
<dbReference type="EMBL" id="X52107">
    <property type="protein sequence ID" value="CAA36332.1"/>
    <property type="molecule type" value="Genomic_DNA"/>
</dbReference>
<dbReference type="PIR" id="S15144">
    <property type="entry name" value="S15144"/>
</dbReference>
<dbReference type="KEGG" id="vg:1260714"/>
<dbReference type="Proteomes" id="UP000002121">
    <property type="component" value="Genome"/>
</dbReference>
<dbReference type="GO" id="GO:0033644">
    <property type="term" value="C:host cell membrane"/>
    <property type="evidence" value="ECO:0007669"/>
    <property type="project" value="UniProtKB-SubCell"/>
</dbReference>
<dbReference type="GO" id="GO:0016020">
    <property type="term" value="C:membrane"/>
    <property type="evidence" value="ECO:0007669"/>
    <property type="project" value="UniProtKB-KW"/>
</dbReference>
<dbReference type="GO" id="GO:0044423">
    <property type="term" value="C:virion component"/>
    <property type="evidence" value="ECO:0007669"/>
    <property type="project" value="UniProtKB-KW"/>
</dbReference>
<dbReference type="GO" id="GO:0098671">
    <property type="term" value="P:adhesion receptor-mediated virion attachment to host cell"/>
    <property type="evidence" value="ECO:0007669"/>
    <property type="project" value="UniProtKB-KW"/>
</dbReference>
<dbReference type="GO" id="GO:0098670">
    <property type="term" value="P:entry receptor-mediated virion attachment to host cell"/>
    <property type="evidence" value="ECO:0007669"/>
    <property type="project" value="UniProtKB-KW"/>
</dbReference>
<dbReference type="GO" id="GO:0099045">
    <property type="term" value="P:viral extrusion"/>
    <property type="evidence" value="ECO:0007669"/>
    <property type="project" value="UniProtKB-KW"/>
</dbReference>
<dbReference type="GO" id="GO:0039666">
    <property type="term" value="P:virion attachment to host cell pilus"/>
    <property type="evidence" value="ECO:0007669"/>
    <property type="project" value="UniProtKB-KW"/>
</dbReference>
<sequence length="437" mass="44800">MSIKTLISVLRVTLLTACLLPSLFFVRSAIAGPYIWEVVMYSSSGSSTPAEACEKARVVADRSPDWNYTSATPKMNGLDNSYCSVVYVSRRDPSVVNTCDDCASWKLFRKGDQCANADDTYNASTGICEPPPKECKEGELFPAKGPDSPVVTSGGRNYVGDGGAPTACYQSCEYGGNPSPASCYLVKGSTTTGFCNYILKGTGQSCGADSYTFSQTGDSLNPPDTPNTDPSDPNDPGCPPGWSWSGTTCVKTPTDPTDPTDPTTPGGDGGGDGNGGGNNNGGGNDGGTGNGDGSGGGDGNGAGDGSGDGDGSGTGGDGNGTCDPAKENCSTGPEGPGGELKEPTPGTWDDAIATWEKKVEEAKKELKTKVKANVDQMKGAFDLNLAEGGGQLPCESMTIWGKSYSLCISDYAGQLSSLRVALLLMAALIAALILLKD</sequence>
<organismHost>
    <name type="scientific">Pseudomonas aeruginosa</name>
    <dbReference type="NCBI Taxonomy" id="287"/>
</organismHost>
<proteinExistence type="inferred from homology"/>
<organism>
    <name type="scientific">Pseudomonas phage Pf1</name>
    <name type="common">Bacteriophage Pf1</name>
    <dbReference type="NCBI Taxonomy" id="2011081"/>
    <lineage>
        <taxon>Viruses</taxon>
        <taxon>Monodnaviria</taxon>
        <taxon>Loebvirae</taxon>
        <taxon>Hofneiviricota</taxon>
        <taxon>Faserviricetes</taxon>
        <taxon>Tubulavirales</taxon>
        <taxon>Inoviridae</taxon>
        <taxon>Primolicivirus</taxon>
    </lineage>
</organism>
<protein>
    <recommendedName>
        <fullName>Attachment protein G3P</fullName>
    </recommendedName>
    <alternativeName>
        <fullName>Gene 3 protein</fullName>
        <shortName>G3P</shortName>
    </alternativeName>
    <alternativeName>
        <fullName>Minor coat protein</fullName>
    </alternativeName>
</protein>
<evidence type="ECO:0000250" key="1">
    <source>
        <dbReference type="UniProtKB" id="O80297"/>
    </source>
</evidence>
<evidence type="ECO:0000250" key="2">
    <source>
        <dbReference type="UniProtKB" id="P03661"/>
    </source>
</evidence>
<evidence type="ECO:0000255" key="3"/>
<evidence type="ECO:0000256" key="4">
    <source>
        <dbReference type="SAM" id="MobiDB-lite"/>
    </source>
</evidence>
<evidence type="ECO:0000305" key="5"/>
<name>G3P_BPPF1</name>
<feature type="signal peptide" evidence="3">
    <location>
        <begin position="1"/>
        <end position="31"/>
    </location>
</feature>
<feature type="chain" id="PRO_0000003295" description="Attachment protein G3P">
    <location>
        <begin position="32"/>
        <end position="437"/>
    </location>
</feature>
<feature type="transmembrane region" description="Helical" evidence="3">
    <location>
        <begin position="415"/>
        <end position="435"/>
    </location>
</feature>
<feature type="region of interest" description="Disordered" evidence="4">
    <location>
        <begin position="214"/>
        <end position="347"/>
    </location>
</feature>
<feature type="compositionally biased region" description="Low complexity" evidence="4">
    <location>
        <begin position="218"/>
        <end position="235"/>
    </location>
</feature>
<feature type="compositionally biased region" description="Low complexity" evidence="4">
    <location>
        <begin position="252"/>
        <end position="265"/>
    </location>
</feature>
<feature type="compositionally biased region" description="Gly residues" evidence="4">
    <location>
        <begin position="266"/>
        <end position="319"/>
    </location>
</feature>